<organism>
    <name type="scientific">Mus musculus</name>
    <name type="common">Mouse</name>
    <dbReference type="NCBI Taxonomy" id="10090"/>
    <lineage>
        <taxon>Eukaryota</taxon>
        <taxon>Metazoa</taxon>
        <taxon>Chordata</taxon>
        <taxon>Craniata</taxon>
        <taxon>Vertebrata</taxon>
        <taxon>Euteleostomi</taxon>
        <taxon>Mammalia</taxon>
        <taxon>Eutheria</taxon>
        <taxon>Euarchontoglires</taxon>
        <taxon>Glires</taxon>
        <taxon>Rodentia</taxon>
        <taxon>Myomorpha</taxon>
        <taxon>Muroidea</taxon>
        <taxon>Muridae</taxon>
        <taxon>Murinae</taxon>
        <taxon>Mus</taxon>
        <taxon>Mus</taxon>
    </lineage>
</organism>
<evidence type="ECO:0000250" key="1"/>
<evidence type="ECO:0000255" key="2"/>
<evidence type="ECO:0000255" key="3">
    <source>
        <dbReference type="PROSITE-ProRule" id="PRU00129"/>
    </source>
</evidence>
<evidence type="ECO:0000255" key="4">
    <source>
        <dbReference type="PROSITE-ProRule" id="PRU00175"/>
    </source>
</evidence>
<evidence type="ECO:0000255" key="5">
    <source>
        <dbReference type="PROSITE-ProRule" id="PRU00207"/>
    </source>
</evidence>
<evidence type="ECO:0000269" key="6">
    <source>
    </source>
</evidence>
<evidence type="ECO:0000269" key="7">
    <source>
    </source>
</evidence>
<evidence type="ECO:0000305" key="8"/>
<evidence type="ECO:0007829" key="9">
    <source>
        <dbReference type="PDB" id="4GJH"/>
    </source>
</evidence>
<gene>
    <name type="primary">Traf5</name>
</gene>
<reference key="1">
    <citation type="journal article" date="1996" name="J. Biol. Chem.">
        <title>TRAF5, an activator of NF-kappaB and putative signal transducer for the lymphotoxin-beta receptor.</title>
        <authorList>
            <person name="Nakano H."/>
            <person name="Oshima H."/>
            <person name="Chung W."/>
            <person name="Williams-Abbott L."/>
            <person name="Ware C.F."/>
            <person name="Yagita H."/>
            <person name="Okumura K."/>
        </authorList>
    </citation>
    <scope>NUCLEOTIDE SEQUENCE [MRNA]</scope>
    <scope>INTERACTION WITH LTBR</scope>
    <source>
        <strain>BALB/cJ</strain>
    </source>
</reference>
<reference key="2">
    <citation type="journal article" date="1996" name="Proc. Natl. Acad. Sci. U.S.A.">
        <title>TRAF5, a novel tumor necrosis factor receptor-associated factor family protein, mediates CD40 signaling.</title>
        <authorList>
            <person name="Ishida T."/>
            <person name="Tojo T."/>
            <person name="Aoki T."/>
            <person name="Kobayashi N."/>
            <person name="Ohishi T."/>
            <person name="Watanabe T."/>
            <person name="Yamamoto T."/>
            <person name="Inoue J."/>
        </authorList>
    </citation>
    <scope>NUCLEOTIDE SEQUENCE [MRNA]</scope>
    <scope>INTERACTION WITH TNFRSF5</scope>
</reference>
<reference key="3">
    <citation type="journal article" date="2004" name="Genome Res.">
        <title>The status, quality, and expansion of the NIH full-length cDNA project: the Mammalian Gene Collection (MGC).</title>
        <authorList>
            <consortium name="The MGC Project Team"/>
        </authorList>
    </citation>
    <scope>NUCLEOTIDE SEQUENCE [LARGE SCALE MRNA]</scope>
    <source>
        <tissue>Colon</tissue>
    </source>
</reference>
<reference key="4">
    <citation type="journal article" date="2004" name="Mol. Cell. Biol.">
        <title>TRAF family proteins link PKR with NF-kappa B activation.</title>
        <authorList>
            <person name="Gil J."/>
            <person name="Garcia M.A."/>
            <person name="Gomez-Puertas P."/>
            <person name="Guerra S."/>
            <person name="Rullas J."/>
            <person name="Nakano H."/>
            <person name="Alcami J."/>
            <person name="Esteban M."/>
        </authorList>
    </citation>
    <scope>FUNCTION</scope>
</reference>
<reference key="5">
    <citation type="journal article" date="2013" name="Nat. Immunol.">
        <title>A combinatorial F box protein directed pathway controls TRAF adaptor stability to regulate inflammation.</title>
        <authorList>
            <person name="Chen B.B."/>
            <person name="Coon T.A."/>
            <person name="Glasser J.R."/>
            <person name="McVerry B.J."/>
            <person name="Zhao J."/>
            <person name="Zhao Y."/>
            <person name="Zou C."/>
            <person name="Ellis B."/>
            <person name="Sciurba F.C."/>
            <person name="Zhang Y."/>
            <person name="Mallampalli R.K."/>
        </authorList>
    </citation>
    <scope>UBIQUITINATION AT LYS-318</scope>
    <scope>MUTAGENESIS OF LYS-318 AND TRP-408</scope>
</reference>
<proteinExistence type="evidence at protein level"/>
<feature type="chain" id="PRO_0000056406" description="TNF receptor-associated factor 5">
    <location>
        <begin position="1"/>
        <end position="558"/>
    </location>
</feature>
<feature type="domain" description="MATH" evidence="3">
    <location>
        <begin position="403"/>
        <end position="550"/>
    </location>
</feature>
<feature type="zinc finger region" description="RING-type" evidence="4">
    <location>
        <begin position="45"/>
        <end position="85"/>
    </location>
</feature>
<feature type="zinc finger region" description="TRAF-type 1" evidence="5">
    <location>
        <begin position="127"/>
        <end position="181"/>
    </location>
</feature>
<feature type="zinc finger region" description="TRAF-type 2" evidence="5">
    <location>
        <begin position="182"/>
        <end position="239"/>
    </location>
</feature>
<feature type="region of interest" description="Interaction with EIF2AK2/PKR" evidence="1">
    <location>
        <begin position="345"/>
        <end position="558"/>
    </location>
</feature>
<feature type="coiled-coil region" evidence="2">
    <location>
        <begin position="252"/>
        <end position="302"/>
    </location>
</feature>
<feature type="coiled-coil region" evidence="2">
    <location>
        <begin position="340"/>
        <end position="400"/>
    </location>
</feature>
<feature type="cross-link" description="Glycyl lysine isopeptide (Lys-Gly) (interchain with G-Cter in ubiquitin)" evidence="7">
    <location>
        <position position="318"/>
    </location>
</feature>
<feature type="mutagenesis site" description="Abolished ubiquitination by the SCF(FBXL2) complex." evidence="7">
    <original>K</original>
    <variation>R</variation>
    <location>
        <position position="318"/>
    </location>
</feature>
<feature type="mutagenesis site" description="Decreased interaction with FBXL2." evidence="7">
    <original>W</original>
    <variation>A</variation>
    <location>
        <position position="408"/>
    </location>
</feature>
<feature type="sequence conflict" description="In Ref. 1; BAA11218." evidence="8" ref="1">
    <original>Q</original>
    <variation>H</variation>
    <location>
        <position position="328"/>
    </location>
</feature>
<feature type="helix" evidence="9">
    <location>
        <begin position="384"/>
        <end position="399"/>
    </location>
</feature>
<feature type="strand" evidence="9">
    <location>
        <begin position="402"/>
        <end position="410"/>
    </location>
</feature>
<feature type="helix" evidence="9">
    <location>
        <begin position="413"/>
        <end position="421"/>
    </location>
</feature>
<feature type="strand" evidence="9">
    <location>
        <begin position="433"/>
        <end position="436"/>
    </location>
</feature>
<feature type="strand" evidence="9">
    <location>
        <begin position="441"/>
        <end position="447"/>
    </location>
</feature>
<feature type="helix" evidence="9">
    <location>
        <begin position="452"/>
        <end position="454"/>
    </location>
</feature>
<feature type="turn" evidence="9">
    <location>
        <begin position="455"/>
        <end position="457"/>
    </location>
</feature>
<feature type="strand" evidence="9">
    <location>
        <begin position="458"/>
        <end position="466"/>
    </location>
</feature>
<feature type="helix" evidence="9">
    <location>
        <begin position="471"/>
        <end position="473"/>
    </location>
</feature>
<feature type="strand" evidence="9">
    <location>
        <begin position="481"/>
        <end position="486"/>
    </location>
</feature>
<feature type="strand" evidence="9">
    <location>
        <begin position="496"/>
        <end position="501"/>
    </location>
</feature>
<feature type="helix" evidence="9">
    <location>
        <begin position="507"/>
        <end position="509"/>
    </location>
</feature>
<feature type="strand" evidence="9">
    <location>
        <begin position="513"/>
        <end position="516"/>
    </location>
</feature>
<feature type="strand" evidence="9">
    <location>
        <begin position="520"/>
        <end position="527"/>
    </location>
</feature>
<feature type="helix" evidence="9">
    <location>
        <begin position="528"/>
        <end position="532"/>
    </location>
</feature>
<feature type="strand" evidence="9">
    <location>
        <begin position="538"/>
        <end position="540"/>
    </location>
</feature>
<feature type="strand" evidence="9">
    <location>
        <begin position="543"/>
        <end position="550"/>
    </location>
</feature>
<keyword id="KW-0002">3D-structure</keyword>
<keyword id="KW-0053">Apoptosis</keyword>
<keyword id="KW-0175">Coiled coil</keyword>
<keyword id="KW-0963">Cytoplasm</keyword>
<keyword id="KW-1017">Isopeptide bond</keyword>
<keyword id="KW-0479">Metal-binding</keyword>
<keyword id="KW-1185">Reference proteome</keyword>
<keyword id="KW-0677">Repeat</keyword>
<keyword id="KW-0832">Ubl conjugation</keyword>
<keyword id="KW-0862">Zinc</keyword>
<keyword id="KW-0863">Zinc-finger</keyword>
<accession>P70191</accession>
<accession>Q61480</accession>
<sequence>MAHSEEQAAVPCAFIRQNSGNSISLDFEPDTEYQFVEQLEERYKCAFCHSVLHNPHQTGCGHRFCQQCIRSLRELNSVPICPVDKEVIKPQEVFKDNCCKREVLNLHVYCKNAPGCNARIILGRFQDHLQHCSFQAVPCPNESCREAMLRKDVKEHLSAYCRFREEKCLYCKRDIVVTNLQDHEENSCPAYPVSCPNRCVQTIPRARVNEHLTVCPEAEQDCPFKHYGCTVKGKRGNLLEHERAALQDHMLLVLEKNYQLEQRISDLYQSLEQKESKIQQLAETVKKFEKELKQFTQMFGRNGTFLSNVQALTSHTDKSAWLEAQVRQLLQIVNQQPSRLDLRSLVDAVDSVKQRITQLEASDQRLVLLEGETSKHDAHINIHKAQLNKNEERFKQLEGACYSGKLIWKVTDYRVKKREAVEGHTVSVFSQPFYTSRCGYRLCARAYLNGDGSGKGTHLSLYFVVMRGEFDSLLQWPFRQRVTLMLLDQSGKKNHIVETFKADPNSSSFKRPDGEMNIASGCPRFVSHSTLENSKNTYIKDDTLFLKVAVDLTDLEDL</sequence>
<protein>
    <recommendedName>
        <fullName>TNF receptor-associated factor 5</fullName>
    </recommendedName>
</protein>
<name>TRAF5_MOUSE</name>
<comment type="function">
    <text evidence="6">Adapter protein and signal transducer that links members of the tumor necrosis factor receptor family to different signaling pathways by association with the receptor cytoplasmic domain and kinases. Mediates activation of NF-kappa-B and probably JNK. Seems to be involved in apoptosis. Plays a role in mediating activation of NF-kappa-B by EIF2AK2/PKR.</text>
</comment>
<comment type="subunit">
    <text evidence="1 8">Homotrimer (Probable). Heterotrimer with TRAF3 (By similarity). Associates with TNFRSF5/CD40 through interaction with TRAF3 (By similarity). Associates with LTBR/TNFRSF3, TNFRSF4, TNFRSF8/CD30, TNFRSF11A/RANK, TNFRSF13B/TACI, TNFRSF14, TNFRSF17, TNFRSF19/TROY, RIPK2, MAP3K14, MAP3K5, and TRAF and TNF receptor associated protein TDP2 (By similarity). Interacts (via C-terminus) with EIF2AK2/PKR (via the kinase catalytic domain) (By similarity).</text>
</comment>
<comment type="interaction">
    <interactant intactId="EBI-523899">
        <id>P70191</id>
    </interactant>
    <interactant intactId="EBI-2550360">
        <id>Q6PDM2</id>
        <label>Srsf1</label>
    </interactant>
    <organismsDiffer>false</organismsDiffer>
    <experiments>2</experiments>
</comment>
<comment type="interaction">
    <interactant intactId="EBI-523899">
        <id>P70191</id>
    </interactant>
    <interactant intactId="EBI-646165">
        <id>Q8N7N6</id>
        <label>Traf3ip2</label>
    </interactant>
    <organismsDiffer>false</organismsDiffer>
    <experiments>3</experiments>
</comment>
<comment type="interaction">
    <interactant intactId="EBI-523899">
        <id>P70191</id>
    </interactant>
    <interactant intactId="EBI-389534">
        <id>P83436</id>
        <label>COG7</label>
    </interactant>
    <organismsDiffer>true</organismsDiffer>
    <experiments>2</experiments>
</comment>
<comment type="interaction">
    <interactant intactId="EBI-523899">
        <id>P70191</id>
    </interactant>
    <interactant intactId="EBI-355744">
        <id>Q12933</id>
        <label>TRAF2</label>
    </interactant>
    <organismsDiffer>true</organismsDiffer>
    <experiments>2</experiments>
</comment>
<comment type="subcellular location">
    <subcellularLocation>
        <location evidence="1">Cytoplasm</location>
    </subcellularLocation>
    <subcellularLocation>
        <location>Cytoplasm</location>
        <location>Cytosol</location>
    </subcellularLocation>
</comment>
<comment type="domain">
    <text>The MATH/TRAF domain binds to receptor cytoplasmic domains.</text>
</comment>
<comment type="PTM">
    <text evidence="7">Ubiquitinated at Lys-318 by the SCF(FBXL2) complex, leading to its degradation by the proteasome.</text>
</comment>
<comment type="similarity">
    <text evidence="8">Belongs to the TNF receptor-associated factor family. A subfamily.</text>
</comment>
<dbReference type="EMBL" id="D78141">
    <property type="protein sequence ID" value="BAA11218.1"/>
    <property type="molecule type" value="mRNA"/>
</dbReference>
<dbReference type="EMBL" id="D83528">
    <property type="protein sequence ID" value="BAA11942.1"/>
    <property type="molecule type" value="mRNA"/>
</dbReference>
<dbReference type="EMBL" id="BC012702">
    <property type="protein sequence ID" value="AAH12702.1"/>
    <property type="molecule type" value="mRNA"/>
</dbReference>
<dbReference type="RefSeq" id="NP_035763.2">
    <property type="nucleotide sequence ID" value="NM_011633.2"/>
</dbReference>
<dbReference type="RefSeq" id="XP_036019524.1">
    <property type="nucleotide sequence ID" value="XM_036163631.1"/>
</dbReference>
<dbReference type="RefSeq" id="XP_036019527.1">
    <property type="nucleotide sequence ID" value="XM_036163634.1"/>
</dbReference>
<dbReference type="PDB" id="4GJH">
    <property type="method" value="X-ray"/>
    <property type="resolution" value="2.80 A"/>
    <property type="chains" value="A/B/C=381-558"/>
</dbReference>
<dbReference type="PDBsum" id="4GJH"/>
<dbReference type="SMR" id="P70191"/>
<dbReference type="BioGRID" id="204306">
    <property type="interactions" value="5"/>
</dbReference>
<dbReference type="DIP" id="DIP-34999N"/>
<dbReference type="FunCoup" id="P70191">
    <property type="interactions" value="251"/>
</dbReference>
<dbReference type="IntAct" id="P70191">
    <property type="interactions" value="14"/>
</dbReference>
<dbReference type="STRING" id="10090.ENSMUSP00000082710"/>
<dbReference type="iPTMnet" id="P70191"/>
<dbReference type="PhosphoSitePlus" id="P70191"/>
<dbReference type="PaxDb" id="10090-ENSMUSP00000082710"/>
<dbReference type="ProteomicsDB" id="259302"/>
<dbReference type="Pumba" id="P70191"/>
<dbReference type="Antibodypedia" id="1975">
    <property type="antibodies" value="300 antibodies from 39 providers"/>
</dbReference>
<dbReference type="DNASU" id="22033"/>
<dbReference type="Ensembl" id="ENSMUST00000195815.3">
    <property type="protein sequence ID" value="ENSMUSP00000141931.3"/>
    <property type="gene ID" value="ENSMUSG00000026637.15"/>
</dbReference>
<dbReference type="GeneID" id="22033"/>
<dbReference type="KEGG" id="mmu:22033"/>
<dbReference type="UCSC" id="uc029qvg.2">
    <property type="organism name" value="mouse"/>
</dbReference>
<dbReference type="AGR" id="MGI:107548"/>
<dbReference type="CTD" id="7188"/>
<dbReference type="MGI" id="MGI:107548">
    <property type="gene designation" value="Traf5"/>
</dbReference>
<dbReference type="eggNOG" id="KOG0297">
    <property type="taxonomic scope" value="Eukaryota"/>
</dbReference>
<dbReference type="GeneTree" id="ENSGT00940000160954"/>
<dbReference type="InParanoid" id="P70191"/>
<dbReference type="OMA" id="NAVPICP"/>
<dbReference type="OrthoDB" id="1737200at2759"/>
<dbReference type="PhylomeDB" id="P70191"/>
<dbReference type="BioGRID-ORCS" id="22033">
    <property type="hits" value="3 hits in 56 CRISPR screens"/>
</dbReference>
<dbReference type="ChiTaRS" id="Traf5">
    <property type="organism name" value="mouse"/>
</dbReference>
<dbReference type="EvolutionaryTrace" id="P70191"/>
<dbReference type="PRO" id="PR:P70191"/>
<dbReference type="Proteomes" id="UP000000589">
    <property type="component" value="Chromosome 1"/>
</dbReference>
<dbReference type="RNAct" id="P70191">
    <property type="molecule type" value="protein"/>
</dbReference>
<dbReference type="Bgee" id="ENSMUSG00000026637">
    <property type="expression patterns" value="Expressed in spleen and 69 other cell types or tissues"/>
</dbReference>
<dbReference type="ExpressionAtlas" id="P70191">
    <property type="expression patterns" value="baseline and differential"/>
</dbReference>
<dbReference type="GO" id="GO:0035631">
    <property type="term" value="C:CD40 receptor complex"/>
    <property type="evidence" value="ECO:0000314"/>
    <property type="project" value="BHF-UCL"/>
</dbReference>
<dbReference type="GO" id="GO:0005813">
    <property type="term" value="C:centrosome"/>
    <property type="evidence" value="ECO:0007669"/>
    <property type="project" value="Ensembl"/>
</dbReference>
<dbReference type="GO" id="GO:0009898">
    <property type="term" value="C:cytoplasmic side of plasma membrane"/>
    <property type="evidence" value="ECO:0000314"/>
    <property type="project" value="BHF-UCL"/>
</dbReference>
<dbReference type="GO" id="GO:0005829">
    <property type="term" value="C:cytosol"/>
    <property type="evidence" value="ECO:0000250"/>
    <property type="project" value="UniProtKB"/>
</dbReference>
<dbReference type="GO" id="GO:0042802">
    <property type="term" value="F:identical protein binding"/>
    <property type="evidence" value="ECO:0007669"/>
    <property type="project" value="Ensembl"/>
</dbReference>
<dbReference type="GO" id="GO:0031996">
    <property type="term" value="F:thioesterase binding"/>
    <property type="evidence" value="ECO:0007669"/>
    <property type="project" value="Ensembl"/>
</dbReference>
<dbReference type="GO" id="GO:0005164">
    <property type="term" value="F:tumor necrosis factor receptor binding"/>
    <property type="evidence" value="ECO:0007669"/>
    <property type="project" value="InterPro"/>
</dbReference>
<dbReference type="GO" id="GO:0061630">
    <property type="term" value="F:ubiquitin protein ligase activity"/>
    <property type="evidence" value="ECO:0007669"/>
    <property type="project" value="Ensembl"/>
</dbReference>
<dbReference type="GO" id="GO:0031625">
    <property type="term" value="F:ubiquitin protein ligase binding"/>
    <property type="evidence" value="ECO:0007669"/>
    <property type="project" value="Ensembl"/>
</dbReference>
<dbReference type="GO" id="GO:0008270">
    <property type="term" value="F:zinc ion binding"/>
    <property type="evidence" value="ECO:0007669"/>
    <property type="project" value="UniProtKB-KW"/>
</dbReference>
<dbReference type="GO" id="GO:0006915">
    <property type="term" value="P:apoptotic process"/>
    <property type="evidence" value="ECO:0007669"/>
    <property type="project" value="UniProtKB-KW"/>
</dbReference>
<dbReference type="GO" id="GO:0023035">
    <property type="term" value="P:CD40 signaling pathway"/>
    <property type="evidence" value="ECO:0007669"/>
    <property type="project" value="Ensembl"/>
</dbReference>
<dbReference type="GO" id="GO:0097400">
    <property type="term" value="P:interleukin-17-mediated signaling pathway"/>
    <property type="evidence" value="ECO:0000314"/>
    <property type="project" value="MGI"/>
</dbReference>
<dbReference type="GO" id="GO:0048255">
    <property type="term" value="P:mRNA stabilization"/>
    <property type="evidence" value="ECO:0000315"/>
    <property type="project" value="MGI"/>
</dbReference>
<dbReference type="GO" id="GO:0043123">
    <property type="term" value="P:positive regulation of canonical NF-kappaB signal transduction"/>
    <property type="evidence" value="ECO:0007669"/>
    <property type="project" value="Ensembl"/>
</dbReference>
<dbReference type="GO" id="GO:0008284">
    <property type="term" value="P:positive regulation of cell population proliferation"/>
    <property type="evidence" value="ECO:0000315"/>
    <property type="project" value="MGI"/>
</dbReference>
<dbReference type="GO" id="GO:0051092">
    <property type="term" value="P:positive regulation of NF-kappaB transcription factor activity"/>
    <property type="evidence" value="ECO:0000315"/>
    <property type="project" value="UniProtKB"/>
</dbReference>
<dbReference type="GO" id="GO:0042981">
    <property type="term" value="P:regulation of apoptotic process"/>
    <property type="evidence" value="ECO:0007669"/>
    <property type="project" value="InterPro"/>
</dbReference>
<dbReference type="GO" id="GO:0007165">
    <property type="term" value="P:signal transduction"/>
    <property type="evidence" value="ECO:0000315"/>
    <property type="project" value="MGI"/>
</dbReference>
<dbReference type="GO" id="GO:0023019">
    <property type="term" value="P:signal transduction involved in regulation of gene expression"/>
    <property type="evidence" value="ECO:0000314"/>
    <property type="project" value="MGI"/>
</dbReference>
<dbReference type="GO" id="GO:0033209">
    <property type="term" value="P:tumor necrosis factor-mediated signaling pathway"/>
    <property type="evidence" value="ECO:0007669"/>
    <property type="project" value="Ensembl"/>
</dbReference>
<dbReference type="CDD" id="cd03780">
    <property type="entry name" value="MATH_TRAF5"/>
    <property type="match status" value="1"/>
</dbReference>
<dbReference type="CDD" id="cd16642">
    <property type="entry name" value="mRING-HC-C3HC3D_TRAF5"/>
    <property type="match status" value="1"/>
</dbReference>
<dbReference type="FunFam" id="2.60.210.10:FF:000001">
    <property type="entry name" value="TNF receptor-associated factor"/>
    <property type="match status" value="1"/>
</dbReference>
<dbReference type="FunFam" id="3.30.40.10:FF:000274">
    <property type="entry name" value="TNF receptor-associated factor"/>
    <property type="match status" value="1"/>
</dbReference>
<dbReference type="FunFam" id="3.30.40.10:FF:000323">
    <property type="entry name" value="TNF receptor-associated factor"/>
    <property type="match status" value="1"/>
</dbReference>
<dbReference type="FunFam" id="3.30.40.10:FF:000356">
    <property type="entry name" value="TNF receptor-associated factor"/>
    <property type="match status" value="1"/>
</dbReference>
<dbReference type="Gene3D" id="2.60.210.10">
    <property type="entry name" value="Apoptosis, Tumor Necrosis Factor Receptor Associated Protein 2, Chain A"/>
    <property type="match status" value="1"/>
</dbReference>
<dbReference type="Gene3D" id="3.30.40.10">
    <property type="entry name" value="Zinc/RING finger domain, C3HC4 (zinc finger)"/>
    <property type="match status" value="3"/>
</dbReference>
<dbReference type="InterPro" id="IPR002083">
    <property type="entry name" value="MATH/TRAF_dom"/>
</dbReference>
<dbReference type="InterPro" id="IPR012227">
    <property type="entry name" value="TNF_rcpt-assoc_TRAF_met"/>
</dbReference>
<dbReference type="InterPro" id="IPR008974">
    <property type="entry name" value="TRAF-like"/>
</dbReference>
<dbReference type="InterPro" id="IPR049342">
    <property type="entry name" value="TRAF1-6_MATH_dom"/>
</dbReference>
<dbReference type="InterPro" id="IPR049440">
    <property type="entry name" value="TRAF3/5_RING"/>
</dbReference>
<dbReference type="InterPro" id="IPR027130">
    <property type="entry name" value="TRAF5_C3HC3D_RING-HC_finger"/>
</dbReference>
<dbReference type="InterPro" id="IPR001841">
    <property type="entry name" value="Znf_RING"/>
</dbReference>
<dbReference type="InterPro" id="IPR013083">
    <property type="entry name" value="Znf_RING/FYVE/PHD"/>
</dbReference>
<dbReference type="InterPro" id="IPR017907">
    <property type="entry name" value="Znf_RING_CS"/>
</dbReference>
<dbReference type="InterPro" id="IPR001293">
    <property type="entry name" value="Znf_TRAF"/>
</dbReference>
<dbReference type="PANTHER" id="PTHR10131">
    <property type="entry name" value="TNF RECEPTOR ASSOCIATED FACTOR"/>
    <property type="match status" value="1"/>
</dbReference>
<dbReference type="PANTHER" id="PTHR10131:SF83">
    <property type="entry name" value="TNF RECEPTOR-ASSOCIATED FACTOR 5"/>
    <property type="match status" value="1"/>
</dbReference>
<dbReference type="Pfam" id="PF21355">
    <property type="entry name" value="TRAF-mep_MATH"/>
    <property type="match status" value="1"/>
</dbReference>
<dbReference type="Pfam" id="PF21363">
    <property type="entry name" value="TRAF3_RING"/>
    <property type="match status" value="1"/>
</dbReference>
<dbReference type="Pfam" id="PF02176">
    <property type="entry name" value="zf-TRAF"/>
    <property type="match status" value="1"/>
</dbReference>
<dbReference type="PIRSF" id="PIRSF015614">
    <property type="entry name" value="TRAF"/>
    <property type="match status" value="1"/>
</dbReference>
<dbReference type="SMART" id="SM00061">
    <property type="entry name" value="MATH"/>
    <property type="match status" value="1"/>
</dbReference>
<dbReference type="SMART" id="SM00184">
    <property type="entry name" value="RING"/>
    <property type="match status" value="1"/>
</dbReference>
<dbReference type="SUPFAM" id="SSF57850">
    <property type="entry name" value="RING/U-box"/>
    <property type="match status" value="1"/>
</dbReference>
<dbReference type="SUPFAM" id="SSF49599">
    <property type="entry name" value="TRAF domain-like"/>
    <property type="match status" value="3"/>
</dbReference>
<dbReference type="PROSITE" id="PS50144">
    <property type="entry name" value="MATH"/>
    <property type="match status" value="1"/>
</dbReference>
<dbReference type="PROSITE" id="PS00518">
    <property type="entry name" value="ZF_RING_1"/>
    <property type="match status" value="1"/>
</dbReference>
<dbReference type="PROSITE" id="PS50089">
    <property type="entry name" value="ZF_RING_2"/>
    <property type="match status" value="1"/>
</dbReference>
<dbReference type="PROSITE" id="PS50145">
    <property type="entry name" value="ZF_TRAF"/>
    <property type="match status" value="2"/>
</dbReference>